<name>AFR1_CRYD2</name>
<comment type="function">
    <text evidence="5 6">Major pleiotropic ABC efflux transporter that confers resistance to structurally and functionally unrelated compounds including azoles such as fluconazole (FLC), itraconazole (ITC), posaconazole (POS), and voriconazole (VRC) (PubMed:25630649, PubMed:29378705). Is also able to efflux the eukaryote protein synthesis inhibitor cycloheximide (CHX) (PubMed:29378705).</text>
</comment>
<comment type="catalytic activity">
    <reaction evidence="5">
        <text>itraconazole(in) + ATP + H2O = itraconazole(out) + ADP + phosphate + H(+)</text>
        <dbReference type="Rhea" id="RHEA:33503"/>
        <dbReference type="ChEBI" id="CHEBI:6076"/>
        <dbReference type="ChEBI" id="CHEBI:15377"/>
        <dbReference type="ChEBI" id="CHEBI:15378"/>
        <dbReference type="ChEBI" id="CHEBI:30616"/>
        <dbReference type="ChEBI" id="CHEBI:43474"/>
        <dbReference type="ChEBI" id="CHEBI:456216"/>
    </reaction>
    <physiologicalReaction direction="left-to-right" evidence="5">
        <dbReference type="Rhea" id="RHEA:33504"/>
    </physiologicalReaction>
</comment>
<comment type="catalytic activity">
    <reaction evidence="5">
        <text>voriconazole(in) + ATP + H2O = voriconazole(out) + ADP + phosphate + H(+)</text>
        <dbReference type="Rhea" id="RHEA:61912"/>
        <dbReference type="ChEBI" id="CHEBI:10023"/>
        <dbReference type="ChEBI" id="CHEBI:15377"/>
        <dbReference type="ChEBI" id="CHEBI:15378"/>
        <dbReference type="ChEBI" id="CHEBI:30616"/>
        <dbReference type="ChEBI" id="CHEBI:43474"/>
        <dbReference type="ChEBI" id="CHEBI:456216"/>
    </reaction>
    <physiologicalReaction direction="left-to-right" evidence="5">
        <dbReference type="Rhea" id="RHEA:61913"/>
    </physiologicalReaction>
</comment>
<comment type="catalytic activity">
    <reaction evidence="5">
        <text>fluconazole(in) + ATP + H2O = fluconazole(out) + ADP + phosphate + H(+)</text>
        <dbReference type="Rhea" id="RHEA:61916"/>
        <dbReference type="ChEBI" id="CHEBI:15377"/>
        <dbReference type="ChEBI" id="CHEBI:15378"/>
        <dbReference type="ChEBI" id="CHEBI:30616"/>
        <dbReference type="ChEBI" id="CHEBI:43474"/>
        <dbReference type="ChEBI" id="CHEBI:46081"/>
        <dbReference type="ChEBI" id="CHEBI:456216"/>
    </reaction>
    <physiologicalReaction direction="left-to-right" evidence="5">
        <dbReference type="Rhea" id="RHEA:61917"/>
    </physiologicalReaction>
</comment>
<comment type="biophysicochemical properties">
    <kinetics>
        <KM evidence="5">0.65 uM for fluconazole transport</KM>
        <Vmax evidence="5">65.6 pmol/min/mg enzyme for fluconazole transport</Vmax>
    </kinetics>
</comment>
<comment type="subcellular location">
    <subcellularLocation>
        <location evidence="5">Cell membrane</location>
        <topology evidence="1">Multi-pass membrane protein</topology>
    </subcellularLocation>
</comment>
<comment type="induction">
    <text evidence="5 6">Expression is induced in the presence of fluconazole (FLC).</text>
</comment>
<comment type="disruption phenotype">
    <text evidence="6">Results in drastically higher susceptibility to fluconazole (FLC), itraconazole (ITC), voriconazole (VRC), as well as to the eukaryote protein synthesis inhibitor cycloheximide (CHX).</text>
</comment>
<comment type="similarity">
    <text evidence="8">Belongs to the ABC transporter superfamily. ABCG family. PDR (TC 3.A.1.205) subfamily.</text>
</comment>
<proteinExistence type="evidence at protein level"/>
<protein>
    <recommendedName>
        <fullName evidence="7">ABC multidrug transporter AFR1</fullName>
    </recommendedName>
</protein>
<keyword id="KW-0067">ATP-binding</keyword>
<keyword id="KW-1003">Cell membrane</keyword>
<keyword id="KW-0325">Glycoprotein</keyword>
<keyword id="KW-0472">Membrane</keyword>
<keyword id="KW-0547">Nucleotide-binding</keyword>
<keyword id="KW-0677">Repeat</keyword>
<keyword id="KW-0812">Transmembrane</keyword>
<keyword id="KW-1133">Transmembrane helix</keyword>
<keyword id="KW-0813">Transport</keyword>
<dbReference type="EMBL" id="CP025761">
    <property type="protein sequence ID" value="KGB75362.3"/>
    <property type="molecule type" value="Genomic_DNA"/>
</dbReference>
<dbReference type="SMR" id="P9WEU4"/>
<dbReference type="GlyCosmos" id="P9WEU4">
    <property type="glycosylation" value="4 sites, No reported glycans"/>
</dbReference>
<dbReference type="VEuPathDB" id="FungiDB:CNBG_1200"/>
<dbReference type="Proteomes" id="UP000029445">
    <property type="component" value="Chromosome 3"/>
</dbReference>
<dbReference type="GO" id="GO:0005886">
    <property type="term" value="C:plasma membrane"/>
    <property type="evidence" value="ECO:0007669"/>
    <property type="project" value="UniProtKB-SubCell"/>
</dbReference>
<dbReference type="GO" id="GO:0140359">
    <property type="term" value="F:ABC-type transporter activity"/>
    <property type="evidence" value="ECO:0007669"/>
    <property type="project" value="InterPro"/>
</dbReference>
<dbReference type="GO" id="GO:0005524">
    <property type="term" value="F:ATP binding"/>
    <property type="evidence" value="ECO:0007669"/>
    <property type="project" value="UniProtKB-KW"/>
</dbReference>
<dbReference type="GO" id="GO:0016887">
    <property type="term" value="F:ATP hydrolysis activity"/>
    <property type="evidence" value="ECO:0007669"/>
    <property type="project" value="InterPro"/>
</dbReference>
<dbReference type="CDD" id="cd03233">
    <property type="entry name" value="ABCG_PDR_domain1"/>
    <property type="match status" value="1"/>
</dbReference>
<dbReference type="CDD" id="cd03232">
    <property type="entry name" value="ABCG_PDR_domain2"/>
    <property type="match status" value="1"/>
</dbReference>
<dbReference type="FunFam" id="3.40.50.300:FF:000054">
    <property type="entry name" value="ABC multidrug transporter atrF"/>
    <property type="match status" value="1"/>
</dbReference>
<dbReference type="FunFam" id="3.40.50.300:FF:002422">
    <property type="entry name" value="ATP-binding cassette (ABC) transporter, putative Pdr11p"/>
    <property type="match status" value="1"/>
</dbReference>
<dbReference type="Gene3D" id="3.40.50.300">
    <property type="entry name" value="P-loop containing nucleotide triphosphate hydrolases"/>
    <property type="match status" value="2"/>
</dbReference>
<dbReference type="InterPro" id="IPR003593">
    <property type="entry name" value="AAA+_ATPase"/>
</dbReference>
<dbReference type="InterPro" id="IPR013525">
    <property type="entry name" value="ABC2_TM"/>
</dbReference>
<dbReference type="InterPro" id="IPR003439">
    <property type="entry name" value="ABC_transporter-like_ATP-bd"/>
</dbReference>
<dbReference type="InterPro" id="IPR017871">
    <property type="entry name" value="ABC_transporter-like_CS"/>
</dbReference>
<dbReference type="InterPro" id="IPR043926">
    <property type="entry name" value="ABCG_dom"/>
</dbReference>
<dbReference type="InterPro" id="IPR034001">
    <property type="entry name" value="ABCG_PDR_1"/>
</dbReference>
<dbReference type="InterPro" id="IPR034003">
    <property type="entry name" value="ABCG_PDR_2"/>
</dbReference>
<dbReference type="InterPro" id="IPR027417">
    <property type="entry name" value="P-loop_NTPase"/>
</dbReference>
<dbReference type="InterPro" id="IPR010929">
    <property type="entry name" value="PDR_CDR_ABC"/>
</dbReference>
<dbReference type="PANTHER" id="PTHR19241">
    <property type="entry name" value="ATP-BINDING CASSETTE TRANSPORTER"/>
    <property type="match status" value="1"/>
</dbReference>
<dbReference type="Pfam" id="PF01061">
    <property type="entry name" value="ABC2_membrane"/>
    <property type="match status" value="2"/>
</dbReference>
<dbReference type="Pfam" id="PF19055">
    <property type="entry name" value="ABC2_membrane_7"/>
    <property type="match status" value="1"/>
</dbReference>
<dbReference type="Pfam" id="PF00005">
    <property type="entry name" value="ABC_tran"/>
    <property type="match status" value="2"/>
</dbReference>
<dbReference type="Pfam" id="PF06422">
    <property type="entry name" value="PDR_CDR"/>
    <property type="match status" value="1"/>
</dbReference>
<dbReference type="SMART" id="SM00382">
    <property type="entry name" value="AAA"/>
    <property type="match status" value="1"/>
</dbReference>
<dbReference type="SUPFAM" id="SSF52540">
    <property type="entry name" value="P-loop containing nucleoside triphosphate hydrolases"/>
    <property type="match status" value="2"/>
</dbReference>
<dbReference type="PROSITE" id="PS00211">
    <property type="entry name" value="ABC_TRANSPORTER_1"/>
    <property type="match status" value="1"/>
</dbReference>
<dbReference type="PROSITE" id="PS50893">
    <property type="entry name" value="ABC_TRANSPORTER_2"/>
    <property type="match status" value="2"/>
</dbReference>
<accession>P9WEU4</accession>
<gene>
    <name evidence="7" type="primary">AFR1</name>
    <name type="ORF">CNBG_1200</name>
</gene>
<organism>
    <name type="scientific">Cryptococcus deuterogattii (strain R265)</name>
    <name type="common">Cryptococcus gattii VGII (strain R265)</name>
    <dbReference type="NCBI Taxonomy" id="294750"/>
    <lineage>
        <taxon>Eukaryota</taxon>
        <taxon>Fungi</taxon>
        <taxon>Dikarya</taxon>
        <taxon>Basidiomycota</taxon>
        <taxon>Agaricomycotina</taxon>
        <taxon>Tremellomycetes</taxon>
        <taxon>Tremellales</taxon>
        <taxon>Cryptococcaceae</taxon>
        <taxon>Cryptococcus</taxon>
        <taxon>Cryptococcus gattii species complex</taxon>
    </lineage>
</organism>
<reference key="1">
    <citation type="journal article" date="2011" name="MBio">
        <title>Genome variation in Cryptococcus gattii, an emerging pathogen of immunocompetent hosts.</title>
        <authorList>
            <person name="D'Souza C.A."/>
            <person name="Kronstad J.W."/>
            <person name="Taylor G."/>
            <person name="Warren R."/>
            <person name="Yuen M."/>
            <person name="Hu G."/>
            <person name="Jung W.H."/>
            <person name="Sham A."/>
            <person name="Kidd S.E."/>
            <person name="Tangen K."/>
            <person name="Lee N."/>
            <person name="Zeilmaker T."/>
            <person name="Sawkins J."/>
            <person name="McVicker G."/>
            <person name="Shah S."/>
            <person name="Gnerre S."/>
            <person name="Griggs A."/>
            <person name="Zeng Q."/>
            <person name="Bartlett K."/>
            <person name="Li W."/>
            <person name="Wang X."/>
            <person name="Heitman J."/>
            <person name="Stajich J.E."/>
            <person name="Fraser J.A."/>
            <person name="Meyer W."/>
            <person name="Carter D."/>
            <person name="Schein J."/>
            <person name="Krzywinski M."/>
            <person name="Kwon-Chung K.J."/>
            <person name="Varma A."/>
            <person name="Wang J."/>
            <person name="Brunham R."/>
            <person name="Fyfe M."/>
            <person name="Ouellette B.F.F."/>
            <person name="Siddiqui A."/>
            <person name="Marra M."/>
            <person name="Jones S."/>
            <person name="Holt R."/>
            <person name="Birren B.W."/>
            <person name="Galagan J.E."/>
            <person name="Cuomo C.A."/>
        </authorList>
    </citation>
    <scope>NUCLEOTIDE SEQUENCE [LARGE SCALE GENOMIC DNA]</scope>
    <source>
        <strain>R265</strain>
    </source>
</reference>
<reference key="2">
    <citation type="journal article" date="2015" name="J. Antimicrob. Chemother.">
        <title>Identification and properties of plasma membrane azole efflux pumps from the pathogenic fungi Cryptococcus gattii and Cryptococcus neoformans.</title>
        <authorList>
            <person name="Basso L.R. Jr."/>
            <person name="Gast C.E."/>
            <person name="Bruzual I."/>
            <person name="Wong B."/>
        </authorList>
    </citation>
    <scope>FUNCTION</scope>
    <scope>INDUCTION</scope>
    <scope>CATALYTIC ACTIVITY</scope>
    <scope>SUBSTRATE SPECIFICITY</scope>
    <scope>BIOPHYSICOCHEMICAL PROPERTIES</scope>
    <scope>SUBCELLULAR LOCATION</scope>
</reference>
<reference key="3">
    <citation type="journal article" date="2018" name="Antimicrob. Agents Chemother.">
        <title>Roles of three Cryptococcus neoformans and Cryptococcus gattii efflux pump-coding genes in response to drug treatment.</title>
        <authorList>
            <person name="Chang M."/>
            <person name="Sionov E."/>
            <person name="Khanal Lamichhane A."/>
            <person name="Kwon-Chung K.J."/>
            <person name="Chang Y.C."/>
        </authorList>
    </citation>
    <scope>FUNCTION</scope>
    <scope>DISRUPTION PHENOTYPE</scope>
    <scope>INDUCTION</scope>
</reference>
<sequence>MSAAGVPAELNNLGAPITATTQNPSGLANSQVTSDPVPSATQHDEHRSSAGNTLADEEGDKSVDAEKVEAMYTGDSKQKRLPADSSEDIVAELEPHHVSVHRGKEEFAALERKYSTLSQQSQHELHRPTTRHSIRSSFSRKDRVVSRLTQDEAEKAKEGEGEFNLVQVLRSSRENQDEAGIKRKAVGVIWEDHEVIGAGGMRINIRNFSSAIIEQFMMPALKVLGIFGVNPFAPKPKNILYPSSGLLKPGEMCLVLGRPEAGCTTFLKTITNQRAGYMEIKGNVEYAGVGWKEMRKRYGGEVVYNQEDDDHLPTLTVAQTIRFALATKTPKKKIPGVSAKQFQDDMLDLLLSMLNIKHTANTIVGNAFVRGVSGGERKRVSIAEMFCSGATVCSWDNSTRGLDASTALDYAKSLRLLTDIMGQTTFVSLYQAGEGIYDQFDKVLVLNEGHVAYFGPAKEARQYMIGLGYRDLPRQTTADYLSGCTDVNERRFADGRDETNVPATPEEMGKAYRESEICARMNREREEYKQLMAEDATIREDFKQAVLEQKHKGVSKKSSYTVSFFQQIFIIFKRQLRLKFQDHFGISTGYATSIIIALIVGSVYFRLPETASGAFTRGGLLFLGLLFNALTSFSELPSQMLGRSVLYRQNEYRFYRPAAFAVASVLADVPYNASVIFLFSIVLYFMGGLYSSGGAFFIFYLFVFLTFMVMSAFFRTLGVATSDYNVAARLASVLISFMVTYTGYMIPVQQMKRWLFWIFYLNPLSYGYEAIFANEFSRIDLTCDSSYTIPRNVPQAGITGYPDTLGPNQMCSIFGSTPGNPNVSGSDYMAVGYSYYKTHIWRNFGILVGFFAFFMFLQMMFIEYLEQGAKHFSINVYKKEDKDLKAKNERLAERREAFRAGQLEQDLSELKMRPEPFTWEGLNYTVPIPGGHRQLLNDIYGYVKPGSLTALMGASGAGKTTLLDVLASRKNIGVIEGDILMNGRPIGTDFQRGCAYAEQQDTHEWTTTVREALQYSAYLRQPQHVPKQEKDDYVEDIIELLELQELADAMIGFPGYGLSVEARKRVTIGVELAAKPELLLFLDEPTSGLDGQSAYNIVRFLKKLCAAGQKILCTIHQPNALLFQSFDRLLLLQRGGECVYFGDIGPDSKVLIDYLERNGAKVPHDANPAEFMLEAIGAGSRKRIGSDWGEKWRNSPEFAEVKREIQELKAEALAKPVEEKSSRTEYATSFLFQLKTVLHRTNVALWRNADYQWTRLFAHLAIGLIVTLTFLQLDNSVQSLQYRVFAIFFATVLPALILAQIEPQYIMSRMTFNREASSKMYSSTVFALTQLLAEMPYSLGCAVSFFLLLYYGVGFPHASSRAGYFFLMILVTEIYAVTLGQAVAALSPTILIAALFNPFLLVLFSIFCGVTAPPPTLPYFWRKWMWPLDPFTRLISGLVSTVLQDQEVVCKDGEYQVFPAPSGQTCQQWAGAFAEAVGGYINNPDSTDDCQFCQYRTGQAFFIPLEISFSTRWRDFGIFICYVVFNILVLLIAARFLKWQRR</sequence>
<evidence type="ECO:0000255" key="1"/>
<evidence type="ECO:0000255" key="2">
    <source>
        <dbReference type="PROSITE-ProRule" id="PRU00434"/>
    </source>
</evidence>
<evidence type="ECO:0000255" key="3">
    <source>
        <dbReference type="PROSITE-ProRule" id="PRU00498"/>
    </source>
</evidence>
<evidence type="ECO:0000256" key="4">
    <source>
        <dbReference type="SAM" id="MobiDB-lite"/>
    </source>
</evidence>
<evidence type="ECO:0000269" key="5">
    <source>
    </source>
</evidence>
<evidence type="ECO:0000269" key="6">
    <source>
    </source>
</evidence>
<evidence type="ECO:0000303" key="7">
    <source>
    </source>
</evidence>
<evidence type="ECO:0000305" key="8"/>
<feature type="chain" id="PRO_0000452665" description="ABC multidrug transporter AFR1">
    <location>
        <begin position="1"/>
        <end position="1542"/>
    </location>
</feature>
<feature type="transmembrane region" description="Helical" evidence="1">
    <location>
        <begin position="584"/>
        <end position="604"/>
    </location>
</feature>
<feature type="transmembrane region" description="Helical" evidence="1">
    <location>
        <begin position="618"/>
        <end position="638"/>
    </location>
</feature>
<feature type="transmembrane region" description="Helical" evidence="1">
    <location>
        <begin position="669"/>
        <end position="689"/>
    </location>
</feature>
<feature type="transmembrane region" description="Helical" evidence="1">
    <location>
        <begin position="694"/>
        <end position="714"/>
    </location>
</feature>
<feature type="transmembrane region" description="Helical" evidence="1">
    <location>
        <begin position="726"/>
        <end position="746"/>
    </location>
</feature>
<feature type="transmembrane region" description="Helical" evidence="1">
    <location>
        <begin position="844"/>
        <end position="864"/>
    </location>
</feature>
<feature type="transmembrane region" description="Helical" evidence="1">
    <location>
        <begin position="1253"/>
        <end position="1273"/>
    </location>
</feature>
<feature type="transmembrane region" description="Helical" evidence="1">
    <location>
        <begin position="1284"/>
        <end position="1304"/>
    </location>
</feature>
<feature type="transmembrane region" description="Helical" evidence="1">
    <location>
        <begin position="1335"/>
        <end position="1355"/>
    </location>
</feature>
<feature type="transmembrane region" description="Helical" evidence="1">
    <location>
        <begin position="1365"/>
        <end position="1385"/>
    </location>
</feature>
<feature type="transmembrane region" description="Helical" evidence="1">
    <location>
        <begin position="1390"/>
        <end position="1410"/>
    </location>
</feature>
<feature type="transmembrane region" description="Helical" evidence="1">
    <location>
        <begin position="1516"/>
        <end position="1536"/>
    </location>
</feature>
<feature type="domain" description="ABC transporter 1" evidence="2">
    <location>
        <begin position="221"/>
        <end position="473"/>
    </location>
</feature>
<feature type="domain" description="ABC transporter 2" evidence="2">
    <location>
        <begin position="917"/>
        <end position="1159"/>
    </location>
</feature>
<feature type="region of interest" description="Disordered" evidence="4">
    <location>
        <begin position="1"/>
        <end position="84"/>
    </location>
</feature>
<feature type="region of interest" description="Disordered" evidence="4">
    <location>
        <begin position="118"/>
        <end position="141"/>
    </location>
</feature>
<feature type="compositionally biased region" description="Polar residues" evidence="4">
    <location>
        <begin position="18"/>
        <end position="41"/>
    </location>
</feature>
<feature type="compositionally biased region" description="Basic and acidic residues" evidence="4">
    <location>
        <begin position="60"/>
        <end position="69"/>
    </location>
</feature>
<feature type="binding site" evidence="2">
    <location>
        <begin position="953"/>
        <end position="960"/>
    </location>
    <ligand>
        <name>ATP</name>
        <dbReference type="ChEBI" id="CHEBI:30616"/>
    </ligand>
</feature>
<feature type="glycosylation site" description="N-linked (GlcNAc...) asparagine" evidence="3">
    <location>
        <position position="207"/>
    </location>
</feature>
<feature type="glycosylation site" description="N-linked (GlcNAc...) asparagine" evidence="3">
    <location>
        <position position="397"/>
    </location>
</feature>
<feature type="glycosylation site" description="N-linked (GlcNAc...) asparagine" evidence="3">
    <location>
        <position position="822"/>
    </location>
</feature>
<feature type="glycosylation site" description="N-linked (GlcNAc...) asparagine" evidence="3">
    <location>
        <position position="923"/>
    </location>
</feature>